<dbReference type="EMBL" id="CU329670">
    <property type="protein sequence ID" value="CAA22604.1"/>
    <property type="molecule type" value="Genomic_DNA"/>
</dbReference>
<dbReference type="EMBL" id="AB189991">
    <property type="protein sequence ID" value="BAD42853.1"/>
    <property type="molecule type" value="Genomic_DNA"/>
</dbReference>
<dbReference type="PIR" id="T37753">
    <property type="entry name" value="T37753"/>
</dbReference>
<dbReference type="RefSeq" id="NP_593128.1">
    <property type="nucleotide sequence ID" value="NM_001018524.2"/>
</dbReference>
<dbReference type="SMR" id="O94452"/>
<dbReference type="BioGRID" id="279205">
    <property type="interactions" value="10"/>
</dbReference>
<dbReference type="FunCoup" id="O94452">
    <property type="interactions" value="4"/>
</dbReference>
<dbReference type="IntAct" id="O94452">
    <property type="interactions" value="2"/>
</dbReference>
<dbReference type="MINT" id="O94452"/>
<dbReference type="STRING" id="284812.O94452"/>
<dbReference type="iPTMnet" id="O94452"/>
<dbReference type="PaxDb" id="4896-SPAC1687.10.1"/>
<dbReference type="EnsemblFungi" id="SPAC1687.10.1">
    <property type="protein sequence ID" value="SPAC1687.10.1:pep"/>
    <property type="gene ID" value="SPAC1687.10"/>
</dbReference>
<dbReference type="GeneID" id="2542755"/>
<dbReference type="KEGG" id="spo:2542755"/>
<dbReference type="PomBase" id="SPAC1687.10">
    <property type="gene designation" value="mcp1"/>
</dbReference>
<dbReference type="VEuPathDB" id="FungiDB:SPAC1687.10"/>
<dbReference type="eggNOG" id="KOG4302">
    <property type="taxonomic scope" value="Eukaryota"/>
</dbReference>
<dbReference type="HOGENOM" id="CLU_433575_0_0_1"/>
<dbReference type="InParanoid" id="O94452"/>
<dbReference type="OMA" id="FCLGENS"/>
<dbReference type="PhylomeDB" id="O94452"/>
<dbReference type="PRO" id="PR:O94452"/>
<dbReference type="Proteomes" id="UP000002485">
    <property type="component" value="Chromosome I"/>
</dbReference>
<dbReference type="GO" id="GO:0005737">
    <property type="term" value="C:cytoplasm"/>
    <property type="evidence" value="ECO:0007005"/>
    <property type="project" value="PomBase"/>
</dbReference>
<dbReference type="GO" id="GO:0005881">
    <property type="term" value="C:cytoplasmic microtubule"/>
    <property type="evidence" value="ECO:0007005"/>
    <property type="project" value="PomBase"/>
</dbReference>
<dbReference type="GO" id="GO:1904511">
    <property type="term" value="C:cytoplasmic microtubule plus-end"/>
    <property type="evidence" value="ECO:0000314"/>
    <property type="project" value="PomBase"/>
</dbReference>
<dbReference type="GO" id="GO:0015630">
    <property type="term" value="C:microtubule cytoskeleton"/>
    <property type="evidence" value="ECO:0007005"/>
    <property type="project" value="PomBase"/>
</dbReference>
<dbReference type="GO" id="GO:1990023">
    <property type="term" value="C:mitotic spindle midzone"/>
    <property type="evidence" value="ECO:0000318"/>
    <property type="project" value="GO_Central"/>
</dbReference>
<dbReference type="GO" id="GO:0008017">
    <property type="term" value="F:microtubule binding"/>
    <property type="evidence" value="ECO:0000318"/>
    <property type="project" value="GO_Central"/>
</dbReference>
<dbReference type="GO" id="GO:0051321">
    <property type="term" value="P:meiotic cell cycle"/>
    <property type="evidence" value="ECO:0007669"/>
    <property type="project" value="UniProtKB-KW"/>
</dbReference>
<dbReference type="GO" id="GO:0000226">
    <property type="term" value="P:microtubule cytoskeleton organization"/>
    <property type="evidence" value="ECO:0000318"/>
    <property type="project" value="GO_Central"/>
</dbReference>
<dbReference type="GO" id="GO:0007019">
    <property type="term" value="P:microtubule depolymerization"/>
    <property type="evidence" value="ECO:0000315"/>
    <property type="project" value="PomBase"/>
</dbReference>
<dbReference type="InterPro" id="IPR007145">
    <property type="entry name" value="MAP65_Ase1_PRC1"/>
</dbReference>
<dbReference type="PANTHER" id="PTHR19321:SF41">
    <property type="entry name" value="FASCETTO-RELATED"/>
    <property type="match status" value="1"/>
</dbReference>
<dbReference type="PANTHER" id="PTHR19321">
    <property type="entry name" value="PROTEIN REGULATOR OF CYTOKINESIS 1 PRC1-RELATED"/>
    <property type="match status" value="1"/>
</dbReference>
<keyword id="KW-0175">Coiled coil</keyword>
<keyword id="KW-0469">Meiosis</keyword>
<keyword id="KW-1185">Reference proteome</keyword>
<proteinExistence type="predicted"/>
<feature type="chain" id="PRO_0000096286" description="Meiotic coiled-coil protein 1">
    <location>
        <begin position="1"/>
        <end position="661"/>
    </location>
</feature>
<feature type="region of interest" description="Disordered" evidence="2">
    <location>
        <begin position="410"/>
        <end position="446"/>
    </location>
</feature>
<feature type="region of interest" description="Disordered" evidence="2">
    <location>
        <begin position="467"/>
        <end position="562"/>
    </location>
</feature>
<feature type="region of interest" description="Disordered" evidence="2">
    <location>
        <begin position="573"/>
        <end position="592"/>
    </location>
</feature>
<feature type="coiled-coil region" evidence="1">
    <location>
        <begin position="38"/>
        <end position="78"/>
    </location>
</feature>
<feature type="coiled-coil region" evidence="1">
    <location>
        <begin position="100"/>
        <end position="121"/>
    </location>
</feature>
<feature type="coiled-coil region" evidence="1">
    <location>
        <begin position="143"/>
        <end position="184"/>
    </location>
</feature>
<feature type="coiled-coil region" evidence="1">
    <location>
        <begin position="304"/>
        <end position="320"/>
    </location>
</feature>
<feature type="coiled-coil region" evidence="1">
    <location>
        <begin position="360"/>
        <end position="387"/>
    </location>
</feature>
<feature type="compositionally biased region" description="Low complexity" evidence="2">
    <location>
        <begin position="414"/>
        <end position="430"/>
    </location>
</feature>
<feature type="compositionally biased region" description="Basic and acidic residues" evidence="2">
    <location>
        <begin position="436"/>
        <end position="445"/>
    </location>
</feature>
<feature type="compositionally biased region" description="Polar residues" evidence="2">
    <location>
        <begin position="472"/>
        <end position="481"/>
    </location>
</feature>
<feature type="compositionally biased region" description="Polar residues" evidence="2">
    <location>
        <begin position="548"/>
        <end position="562"/>
    </location>
</feature>
<feature type="compositionally biased region" description="Polar residues" evidence="2">
    <location>
        <begin position="582"/>
        <end position="592"/>
    </location>
</feature>
<organism>
    <name type="scientific">Schizosaccharomyces pombe (strain 972 / ATCC 24843)</name>
    <name type="common">Fission yeast</name>
    <dbReference type="NCBI Taxonomy" id="284812"/>
    <lineage>
        <taxon>Eukaryota</taxon>
        <taxon>Fungi</taxon>
        <taxon>Dikarya</taxon>
        <taxon>Ascomycota</taxon>
        <taxon>Taphrinomycotina</taxon>
        <taxon>Schizosaccharomycetes</taxon>
        <taxon>Schizosaccharomycetales</taxon>
        <taxon>Schizosaccharomycetaceae</taxon>
        <taxon>Schizosaccharomyces</taxon>
    </lineage>
</organism>
<gene>
    <name type="primary">mcp1</name>
    <name type="ORF">SPAC1687.10</name>
</gene>
<accession>O94452</accession>
<protein>
    <recommendedName>
        <fullName>Meiotic coiled-coil protein 1</fullName>
    </recommendedName>
</protein>
<reference key="1">
    <citation type="journal article" date="2007" name="Cell Div.">
        <title>Meiosis specific coiled-coil proteins in Shizosaccharomyces pombe.</title>
        <authorList>
            <person name="Ohtaka A."/>
            <person name="Saito T.T."/>
            <person name="Okuzaki D."/>
            <person name="Nojima H."/>
        </authorList>
    </citation>
    <scope>NUCLEOTIDE SEQUENCE [GENOMIC DNA]</scope>
</reference>
<reference key="2">
    <citation type="journal article" date="2002" name="Nature">
        <title>The genome sequence of Schizosaccharomyces pombe.</title>
        <authorList>
            <person name="Wood V."/>
            <person name="Gwilliam R."/>
            <person name="Rajandream M.A."/>
            <person name="Lyne M.H."/>
            <person name="Lyne R."/>
            <person name="Stewart A."/>
            <person name="Sgouros J.G."/>
            <person name="Peat N."/>
            <person name="Hayles J."/>
            <person name="Baker S.G."/>
            <person name="Basham D."/>
            <person name="Bowman S."/>
            <person name="Brooks K."/>
            <person name="Brown D."/>
            <person name="Brown S."/>
            <person name="Chillingworth T."/>
            <person name="Churcher C.M."/>
            <person name="Collins M."/>
            <person name="Connor R."/>
            <person name="Cronin A."/>
            <person name="Davis P."/>
            <person name="Feltwell T."/>
            <person name="Fraser A."/>
            <person name="Gentles S."/>
            <person name="Goble A."/>
            <person name="Hamlin N."/>
            <person name="Harris D.E."/>
            <person name="Hidalgo J."/>
            <person name="Hodgson G."/>
            <person name="Holroyd S."/>
            <person name="Hornsby T."/>
            <person name="Howarth S."/>
            <person name="Huckle E.J."/>
            <person name="Hunt S."/>
            <person name="Jagels K."/>
            <person name="James K.D."/>
            <person name="Jones L."/>
            <person name="Jones M."/>
            <person name="Leather S."/>
            <person name="McDonald S."/>
            <person name="McLean J."/>
            <person name="Mooney P."/>
            <person name="Moule S."/>
            <person name="Mungall K.L."/>
            <person name="Murphy L.D."/>
            <person name="Niblett D."/>
            <person name="Odell C."/>
            <person name="Oliver K."/>
            <person name="O'Neil S."/>
            <person name="Pearson D."/>
            <person name="Quail M.A."/>
            <person name="Rabbinowitsch E."/>
            <person name="Rutherford K.M."/>
            <person name="Rutter S."/>
            <person name="Saunders D."/>
            <person name="Seeger K."/>
            <person name="Sharp S."/>
            <person name="Skelton J."/>
            <person name="Simmonds M.N."/>
            <person name="Squares R."/>
            <person name="Squares S."/>
            <person name="Stevens K."/>
            <person name="Taylor K."/>
            <person name="Taylor R.G."/>
            <person name="Tivey A."/>
            <person name="Walsh S.V."/>
            <person name="Warren T."/>
            <person name="Whitehead S."/>
            <person name="Woodward J.R."/>
            <person name="Volckaert G."/>
            <person name="Aert R."/>
            <person name="Robben J."/>
            <person name="Grymonprez B."/>
            <person name="Weltjens I."/>
            <person name="Vanstreels E."/>
            <person name="Rieger M."/>
            <person name="Schaefer M."/>
            <person name="Mueller-Auer S."/>
            <person name="Gabel C."/>
            <person name="Fuchs M."/>
            <person name="Duesterhoeft A."/>
            <person name="Fritzc C."/>
            <person name="Holzer E."/>
            <person name="Moestl D."/>
            <person name="Hilbert H."/>
            <person name="Borzym K."/>
            <person name="Langer I."/>
            <person name="Beck A."/>
            <person name="Lehrach H."/>
            <person name="Reinhardt R."/>
            <person name="Pohl T.M."/>
            <person name="Eger P."/>
            <person name="Zimmermann W."/>
            <person name="Wedler H."/>
            <person name="Wambutt R."/>
            <person name="Purnelle B."/>
            <person name="Goffeau A."/>
            <person name="Cadieu E."/>
            <person name="Dreano S."/>
            <person name="Gloux S."/>
            <person name="Lelaure V."/>
            <person name="Mottier S."/>
            <person name="Galibert F."/>
            <person name="Aves S.J."/>
            <person name="Xiang Z."/>
            <person name="Hunt C."/>
            <person name="Moore K."/>
            <person name="Hurst S.M."/>
            <person name="Lucas M."/>
            <person name="Rochet M."/>
            <person name="Gaillardin C."/>
            <person name="Tallada V.A."/>
            <person name="Garzon A."/>
            <person name="Thode G."/>
            <person name="Daga R.R."/>
            <person name="Cruzado L."/>
            <person name="Jimenez J."/>
            <person name="Sanchez M."/>
            <person name="del Rey F."/>
            <person name="Benito J."/>
            <person name="Dominguez A."/>
            <person name="Revuelta J.L."/>
            <person name="Moreno S."/>
            <person name="Armstrong J."/>
            <person name="Forsburg S.L."/>
            <person name="Cerutti L."/>
            <person name="Lowe T."/>
            <person name="McCombie W.R."/>
            <person name="Paulsen I."/>
            <person name="Potashkin J."/>
            <person name="Shpakovski G.V."/>
            <person name="Ussery D."/>
            <person name="Barrell B.G."/>
            <person name="Nurse P."/>
        </authorList>
    </citation>
    <scope>NUCLEOTIDE SEQUENCE [LARGE SCALE GENOMIC DNA]</scope>
    <source>
        <strain>972 / ATCC 24843</strain>
    </source>
</reference>
<name>MCP1_SCHPO</name>
<sequence>MELAKIGDRLNNYYNNIYTLSEKLGYSFTKISFNNIILDALSGHQRKLEIKIINIESKCNELSSEISLLRKRLGIIEEIEIPRTLIDQYECLVTYHNGIRAIYNTKKNEAKNMYKEIERLSVILGESVDEVNFVNGDFEDISDIKLEQLSAKLNELHQIYRLRKEKNIEIKEELKKLQDSLSIKLSMPADDLSKNGIKHLIIYKEKLRFSLESRKSRVDEIVNEMKNMCGKNPTSELPTNYSDKTLTLWENELSSMRKVYFVKYKTEYEFLQKRYLSLARIMFVSKKEMLFTSQFKEIPNVNRELIQSMKQEIGNLEVDLHLQGELNNMIRRYLLLESRVYKESQRMKVLSGSASQPFTLKRLQKDFQLLKAKLICALREWEEDNEKKIYVFGKPLSSRLLMIHSPPILQNQENISSNDNSKSSPESSPPARKTTGKIENKKLRNIDVQSKKSIRFPLRLASHEEPLIDRMVNQSPDTRSVSKSKRLVRETSSGCLFKNHSKSNTLSPRRKGSRHGPREPCLSPDASSSSIPVTDIKEILPSQHDTPHNSVKLTGSSTTPASVSLRQMIEPLLSRTPPKGEFTNSLDDTPTQSNVEKVDRFLENHDWETCSESSSASEDQSLCKQLSSFSLSSSDISKKLKNNLNGLHFSSDEGSKLPTFL</sequence>
<evidence type="ECO:0000255" key="1"/>
<evidence type="ECO:0000256" key="2">
    <source>
        <dbReference type="SAM" id="MobiDB-lite"/>
    </source>
</evidence>